<dbReference type="EMBL" id="AB049944">
    <property type="protein sequence ID" value="BAB40997.1"/>
    <property type="molecule type" value="mRNA"/>
</dbReference>
<dbReference type="EMBL" id="AF320777">
    <property type="protein sequence ID" value="AAK97314.1"/>
    <property type="molecule type" value="Genomic_DNA"/>
</dbReference>
<dbReference type="EMBL" id="AK026165">
    <property type="protein sequence ID" value="BAB15381.1"/>
    <property type="molecule type" value="mRNA"/>
</dbReference>
<dbReference type="EMBL" id="AK315407">
    <property type="protein sequence ID" value="BAG37799.1"/>
    <property type="molecule type" value="mRNA"/>
</dbReference>
<dbReference type="EMBL" id="CH471101">
    <property type="protein sequence ID" value="EAX02000.1"/>
    <property type="molecule type" value="Genomic_DNA"/>
</dbReference>
<dbReference type="EMBL" id="BC009451">
    <property type="protein sequence ID" value="AAH09451.1"/>
    <property type="molecule type" value="mRNA"/>
</dbReference>
<dbReference type="EMBL" id="BC012489">
    <property type="protein sequence ID" value="AAH12489.1"/>
    <property type="molecule type" value="mRNA"/>
</dbReference>
<dbReference type="EMBL" id="BC032378">
    <property type="protein sequence ID" value="AAH32378.1"/>
    <property type="molecule type" value="mRNA"/>
</dbReference>
<dbReference type="CCDS" id="CCDS10342.1">
    <molecule id="P82912-1"/>
</dbReference>
<dbReference type="CCDS" id="CCDS10343.1">
    <molecule id="P82912-3"/>
</dbReference>
<dbReference type="RefSeq" id="NP_001308899.1">
    <molecule id="P82912-2"/>
    <property type="nucleotide sequence ID" value="NM_001321970.2"/>
</dbReference>
<dbReference type="RefSeq" id="NP_001308901.1">
    <property type="nucleotide sequence ID" value="NM_001321972.1"/>
</dbReference>
<dbReference type="RefSeq" id="NP_001308902.1">
    <property type="nucleotide sequence ID" value="NM_001321973.1"/>
</dbReference>
<dbReference type="RefSeq" id="NP_001308903.1">
    <property type="nucleotide sequence ID" value="NM_001321974.1"/>
</dbReference>
<dbReference type="RefSeq" id="NP_001308905.1">
    <property type="nucleotide sequence ID" value="NM_001321976.1"/>
</dbReference>
<dbReference type="RefSeq" id="NP_073750.2">
    <molecule id="P82912-1"/>
    <property type="nucleotide sequence ID" value="NM_022839.4"/>
</dbReference>
<dbReference type="RefSeq" id="NP_789775.1">
    <molecule id="P82912-3"/>
    <property type="nucleotide sequence ID" value="NM_176805.4"/>
</dbReference>
<dbReference type="RefSeq" id="XP_054234627.1">
    <molecule id="P82912-1"/>
    <property type="nucleotide sequence ID" value="XM_054378652.1"/>
</dbReference>
<dbReference type="PDB" id="3J9M">
    <property type="method" value="EM"/>
    <property type="resolution" value="3.50 A"/>
    <property type="chains" value="AI=1-194"/>
</dbReference>
<dbReference type="PDB" id="6NU2">
    <property type="method" value="EM"/>
    <property type="resolution" value="3.90 A"/>
    <property type="chains" value="AI=59-194"/>
</dbReference>
<dbReference type="PDB" id="6NU3">
    <property type="method" value="EM"/>
    <property type="resolution" value="4.40 A"/>
    <property type="chains" value="AI=1-194"/>
</dbReference>
<dbReference type="PDB" id="6RW4">
    <property type="method" value="EM"/>
    <property type="resolution" value="2.97 A"/>
    <property type="chains" value="I=1-194"/>
</dbReference>
<dbReference type="PDB" id="6RW5">
    <property type="method" value="EM"/>
    <property type="resolution" value="3.14 A"/>
    <property type="chains" value="I=1-194"/>
</dbReference>
<dbReference type="PDB" id="6VLZ">
    <property type="method" value="EM"/>
    <property type="resolution" value="2.97 A"/>
    <property type="chains" value="AI=1-194"/>
</dbReference>
<dbReference type="PDB" id="6VMI">
    <property type="method" value="EM"/>
    <property type="resolution" value="2.96 A"/>
    <property type="chains" value="AI=1-194"/>
</dbReference>
<dbReference type="PDB" id="6ZM5">
    <property type="method" value="EM"/>
    <property type="resolution" value="2.89 A"/>
    <property type="chains" value="AI=1-194"/>
</dbReference>
<dbReference type="PDB" id="6ZM6">
    <property type="method" value="EM"/>
    <property type="resolution" value="2.59 A"/>
    <property type="chains" value="AI=1-194"/>
</dbReference>
<dbReference type="PDB" id="6ZS9">
    <property type="method" value="EM"/>
    <property type="resolution" value="4.00 A"/>
    <property type="chains" value="AI=1-194"/>
</dbReference>
<dbReference type="PDB" id="6ZSA">
    <property type="method" value="EM"/>
    <property type="resolution" value="4.00 A"/>
    <property type="chains" value="AI=1-194"/>
</dbReference>
<dbReference type="PDB" id="6ZSB">
    <property type="method" value="EM"/>
    <property type="resolution" value="4.50 A"/>
    <property type="chains" value="AI=1-194"/>
</dbReference>
<dbReference type="PDB" id="6ZSC">
    <property type="method" value="EM"/>
    <property type="resolution" value="3.50 A"/>
    <property type="chains" value="AI=1-194"/>
</dbReference>
<dbReference type="PDB" id="6ZSD">
    <property type="method" value="EM"/>
    <property type="resolution" value="3.70 A"/>
    <property type="chains" value="AI=1-194"/>
</dbReference>
<dbReference type="PDB" id="6ZSE">
    <property type="method" value="EM"/>
    <property type="resolution" value="5.00 A"/>
    <property type="chains" value="AI=1-194"/>
</dbReference>
<dbReference type="PDB" id="6ZSG">
    <property type="method" value="EM"/>
    <property type="resolution" value="4.00 A"/>
    <property type="chains" value="AI=1-194"/>
</dbReference>
<dbReference type="PDB" id="7A5F">
    <property type="method" value="EM"/>
    <property type="resolution" value="4.40 A"/>
    <property type="chains" value="I6=1-194"/>
</dbReference>
<dbReference type="PDB" id="7A5G">
    <property type="method" value="EM"/>
    <property type="resolution" value="4.33 A"/>
    <property type="chains" value="I6=1-194"/>
</dbReference>
<dbReference type="PDB" id="7A5I">
    <property type="method" value="EM"/>
    <property type="resolution" value="3.70 A"/>
    <property type="chains" value="I6=1-194"/>
</dbReference>
<dbReference type="PDB" id="7A5K">
    <property type="method" value="EM"/>
    <property type="resolution" value="3.70 A"/>
    <property type="chains" value="I6=1-194"/>
</dbReference>
<dbReference type="PDB" id="7L08">
    <property type="method" value="EM"/>
    <property type="resolution" value="3.49 A"/>
    <property type="chains" value="AI=1-194"/>
</dbReference>
<dbReference type="PDB" id="7OG4">
    <property type="method" value="EM"/>
    <property type="resolution" value="3.80 A"/>
    <property type="chains" value="AI=1-194"/>
</dbReference>
<dbReference type="PDB" id="7P2E">
    <property type="method" value="EM"/>
    <property type="resolution" value="2.40 A"/>
    <property type="chains" value="I=1-194"/>
</dbReference>
<dbReference type="PDB" id="7PNX">
    <property type="method" value="EM"/>
    <property type="resolution" value="2.76 A"/>
    <property type="chains" value="I=1-194"/>
</dbReference>
<dbReference type="PDB" id="7PNY">
    <property type="method" value="EM"/>
    <property type="resolution" value="3.06 A"/>
    <property type="chains" value="I=1-194"/>
</dbReference>
<dbReference type="PDB" id="7PNZ">
    <property type="method" value="EM"/>
    <property type="resolution" value="3.09 A"/>
    <property type="chains" value="I=1-194"/>
</dbReference>
<dbReference type="PDB" id="7PO0">
    <property type="method" value="EM"/>
    <property type="resolution" value="2.90 A"/>
    <property type="chains" value="I=1-194"/>
</dbReference>
<dbReference type="PDB" id="7PO1">
    <property type="method" value="EM"/>
    <property type="resolution" value="2.92 A"/>
    <property type="chains" value="I=1-194"/>
</dbReference>
<dbReference type="PDB" id="7PO2">
    <property type="method" value="EM"/>
    <property type="resolution" value="3.09 A"/>
    <property type="chains" value="I=1-194"/>
</dbReference>
<dbReference type="PDB" id="7PO3">
    <property type="method" value="EM"/>
    <property type="resolution" value="2.92 A"/>
    <property type="chains" value="I=1-194"/>
</dbReference>
<dbReference type="PDB" id="7QI4">
    <property type="method" value="EM"/>
    <property type="resolution" value="2.21 A"/>
    <property type="chains" value="AI=1-194"/>
</dbReference>
<dbReference type="PDB" id="7QI5">
    <property type="method" value="EM"/>
    <property type="resolution" value="2.63 A"/>
    <property type="chains" value="AI=1-194"/>
</dbReference>
<dbReference type="PDB" id="7QI6">
    <property type="method" value="EM"/>
    <property type="resolution" value="2.98 A"/>
    <property type="chains" value="AI=1-194"/>
</dbReference>
<dbReference type="PDB" id="8ANY">
    <property type="method" value="EM"/>
    <property type="resolution" value="2.85 A"/>
    <property type="chains" value="AI=1-194"/>
</dbReference>
<dbReference type="PDB" id="8CSR">
    <property type="method" value="EM"/>
    <property type="resolution" value="2.54 A"/>
    <property type="chains" value="I=1-194"/>
</dbReference>
<dbReference type="PDB" id="8CSS">
    <property type="method" value="EM"/>
    <property type="resolution" value="2.36 A"/>
    <property type="chains" value="I=1-194"/>
</dbReference>
<dbReference type="PDB" id="8CST">
    <property type="method" value="EM"/>
    <property type="resolution" value="2.85 A"/>
    <property type="chains" value="I=1-194"/>
</dbReference>
<dbReference type="PDB" id="8CSU">
    <property type="method" value="EM"/>
    <property type="resolution" value="3.03 A"/>
    <property type="chains" value="I=1-194"/>
</dbReference>
<dbReference type="PDB" id="8K2A">
    <property type="method" value="EM"/>
    <property type="resolution" value="2.90 A"/>
    <property type="chains" value="SK=1-194"/>
</dbReference>
<dbReference type="PDB" id="8OIR">
    <property type="method" value="EM"/>
    <property type="resolution" value="3.10 A"/>
    <property type="chains" value="Ai=1-194"/>
</dbReference>
<dbReference type="PDB" id="8OIS">
    <property type="method" value="EM"/>
    <property type="resolution" value="3.00 A"/>
    <property type="chains" value="Ai=1-194"/>
</dbReference>
<dbReference type="PDB" id="8QRK">
    <property type="method" value="EM"/>
    <property type="resolution" value="6.69 A"/>
    <property type="chains" value="I=1-194"/>
</dbReference>
<dbReference type="PDB" id="8QRL">
    <property type="method" value="EM"/>
    <property type="resolution" value="3.34 A"/>
    <property type="chains" value="I=1-194"/>
</dbReference>
<dbReference type="PDB" id="8QRM">
    <property type="method" value="EM"/>
    <property type="resolution" value="3.05 A"/>
    <property type="chains" value="I=1-194"/>
</dbReference>
<dbReference type="PDB" id="8QRN">
    <property type="method" value="EM"/>
    <property type="resolution" value="2.98 A"/>
    <property type="chains" value="I=1-194"/>
</dbReference>
<dbReference type="PDB" id="8RRI">
    <property type="method" value="EM"/>
    <property type="resolution" value="2.40 A"/>
    <property type="chains" value="AI=1-194"/>
</dbReference>
<dbReference type="PDB" id="8XT0">
    <property type="method" value="EM"/>
    <property type="resolution" value="3.20 A"/>
    <property type="chains" value="SK=1-194"/>
</dbReference>
<dbReference type="PDB" id="8XT2">
    <property type="method" value="EM"/>
    <property type="resolution" value="3.30 A"/>
    <property type="chains" value="SK=1-194"/>
</dbReference>
<dbReference type="PDBsum" id="3J9M"/>
<dbReference type="PDBsum" id="6NU2"/>
<dbReference type="PDBsum" id="6NU3"/>
<dbReference type="PDBsum" id="6RW4"/>
<dbReference type="PDBsum" id="6RW5"/>
<dbReference type="PDBsum" id="6VLZ"/>
<dbReference type="PDBsum" id="6VMI"/>
<dbReference type="PDBsum" id="6ZM5"/>
<dbReference type="PDBsum" id="6ZM6"/>
<dbReference type="PDBsum" id="6ZS9"/>
<dbReference type="PDBsum" id="6ZSA"/>
<dbReference type="PDBsum" id="6ZSB"/>
<dbReference type="PDBsum" id="6ZSC"/>
<dbReference type="PDBsum" id="6ZSD"/>
<dbReference type="PDBsum" id="6ZSE"/>
<dbReference type="PDBsum" id="6ZSG"/>
<dbReference type="PDBsum" id="7A5F"/>
<dbReference type="PDBsum" id="7A5G"/>
<dbReference type="PDBsum" id="7A5I"/>
<dbReference type="PDBsum" id="7A5K"/>
<dbReference type="PDBsum" id="7L08"/>
<dbReference type="PDBsum" id="7OG4"/>
<dbReference type="PDBsum" id="7P2E"/>
<dbReference type="PDBsum" id="7PNX"/>
<dbReference type="PDBsum" id="7PNY"/>
<dbReference type="PDBsum" id="7PNZ"/>
<dbReference type="PDBsum" id="7PO0"/>
<dbReference type="PDBsum" id="7PO1"/>
<dbReference type="PDBsum" id="7PO2"/>
<dbReference type="PDBsum" id="7PO3"/>
<dbReference type="PDBsum" id="7QI4"/>
<dbReference type="PDBsum" id="7QI5"/>
<dbReference type="PDBsum" id="7QI6"/>
<dbReference type="PDBsum" id="8ANY"/>
<dbReference type="PDBsum" id="8CSR"/>
<dbReference type="PDBsum" id="8CSS"/>
<dbReference type="PDBsum" id="8CST"/>
<dbReference type="PDBsum" id="8CSU"/>
<dbReference type="PDBsum" id="8K2A"/>
<dbReference type="PDBsum" id="8OIR"/>
<dbReference type="PDBsum" id="8OIS"/>
<dbReference type="PDBsum" id="8QRK"/>
<dbReference type="PDBsum" id="8QRL"/>
<dbReference type="PDBsum" id="8QRM"/>
<dbReference type="PDBsum" id="8QRN"/>
<dbReference type="PDBsum" id="8RRI"/>
<dbReference type="PDBsum" id="8XT0"/>
<dbReference type="PDBsum" id="8XT2"/>
<dbReference type="EMDB" id="EMD-0514"/>
<dbReference type="EMDB" id="EMD-0515"/>
<dbReference type="EMDB" id="EMD-10021"/>
<dbReference type="EMDB" id="EMD-10022"/>
<dbReference type="EMDB" id="EMD-11278"/>
<dbReference type="EMDB" id="EMD-11279"/>
<dbReference type="EMDB" id="EMD-11390"/>
<dbReference type="EMDB" id="EMD-11391"/>
<dbReference type="EMDB" id="EMD-11392"/>
<dbReference type="EMDB" id="EMD-11393"/>
<dbReference type="EMDB" id="EMD-11394"/>
<dbReference type="EMDB" id="EMD-11395"/>
<dbReference type="EMDB" id="EMD-11397"/>
<dbReference type="EMDB" id="EMD-11641"/>
<dbReference type="EMDB" id="EMD-11642"/>
<dbReference type="EMDB" id="EMD-11644"/>
<dbReference type="EMDB" id="EMD-11646"/>
<dbReference type="EMDB" id="EMD-12877"/>
<dbReference type="EMDB" id="EMD-13170"/>
<dbReference type="EMDB" id="EMD-13555"/>
<dbReference type="EMDB" id="EMD-13556"/>
<dbReference type="EMDB" id="EMD-13557"/>
<dbReference type="EMDB" id="EMD-13558"/>
<dbReference type="EMDB" id="EMD-13559"/>
<dbReference type="EMDB" id="EMD-13560"/>
<dbReference type="EMDB" id="EMD-13561"/>
<dbReference type="EMDB" id="EMD-13980"/>
<dbReference type="EMDB" id="EMD-13981"/>
<dbReference type="EMDB" id="EMD-13982"/>
<dbReference type="EMDB" id="EMD-15544"/>
<dbReference type="EMDB" id="EMD-16897"/>
<dbReference type="EMDB" id="EMD-16898"/>
<dbReference type="EMDB" id="EMD-19460"/>
<dbReference type="EMDB" id="EMD-21233"/>
<dbReference type="EMDB" id="EMD-21242"/>
<dbReference type="EMDB" id="EMD-23096"/>
<dbReference type="EMDB" id="EMD-26968"/>
<dbReference type="EMDB" id="EMD-26969"/>
<dbReference type="EMDB" id="EMD-26970"/>
<dbReference type="EMDB" id="EMD-26971"/>
<dbReference type="EMDB" id="EMD-36836"/>
<dbReference type="EMDB" id="EMD-38632"/>
<dbReference type="EMDB" id="EMD-38634"/>
<dbReference type="SMR" id="P82912"/>
<dbReference type="BioGRID" id="122359">
    <property type="interactions" value="279"/>
</dbReference>
<dbReference type="ComplexPortal" id="CPX-5225">
    <property type="entry name" value="28S mitochondrial small ribosomal subunit"/>
</dbReference>
<dbReference type="CORUM" id="P82912"/>
<dbReference type="FunCoup" id="P82912">
    <property type="interactions" value="1441"/>
</dbReference>
<dbReference type="IntAct" id="P82912">
    <property type="interactions" value="142"/>
</dbReference>
<dbReference type="MINT" id="P82912"/>
<dbReference type="STRING" id="9606.ENSP00000317376"/>
<dbReference type="GlyGen" id="P82912">
    <property type="glycosylation" value="1 site, 1 O-linked glycan (1 site)"/>
</dbReference>
<dbReference type="iPTMnet" id="P82912"/>
<dbReference type="PhosphoSitePlus" id="P82912"/>
<dbReference type="SwissPalm" id="P82912"/>
<dbReference type="BioMuta" id="MRPS11"/>
<dbReference type="DMDM" id="21263985"/>
<dbReference type="jPOST" id="P82912"/>
<dbReference type="MassIVE" id="P82912"/>
<dbReference type="PaxDb" id="9606-ENSP00000317376"/>
<dbReference type="PeptideAtlas" id="P82912"/>
<dbReference type="ProteomicsDB" id="57717">
    <molecule id="P82912-1"/>
</dbReference>
<dbReference type="ProteomicsDB" id="57718">
    <molecule id="P82912-2"/>
</dbReference>
<dbReference type="ProteomicsDB" id="57719">
    <molecule id="P82912-3"/>
</dbReference>
<dbReference type="Pumba" id="P82912"/>
<dbReference type="Antibodypedia" id="28484">
    <property type="antibodies" value="301 antibodies from 24 providers"/>
</dbReference>
<dbReference type="DNASU" id="64963"/>
<dbReference type="Ensembl" id="ENST00000325844.9">
    <molecule id="P82912-1"/>
    <property type="protein sequence ID" value="ENSP00000317376.4"/>
    <property type="gene ID" value="ENSG00000181991.16"/>
</dbReference>
<dbReference type="Ensembl" id="ENST00000353598.6">
    <molecule id="P82912-3"/>
    <property type="protein sequence ID" value="ENSP00000318054.7"/>
    <property type="gene ID" value="ENSG00000181991.16"/>
</dbReference>
<dbReference type="GeneID" id="64963"/>
<dbReference type="KEGG" id="hsa:64963"/>
<dbReference type="MANE-Select" id="ENST00000325844.9">
    <property type="protein sequence ID" value="ENSP00000317376.4"/>
    <property type="RefSeq nucleotide sequence ID" value="NM_022839.5"/>
    <property type="RefSeq protein sequence ID" value="NP_073750.2"/>
</dbReference>
<dbReference type="UCSC" id="uc002bml.4">
    <molecule id="P82912-1"/>
    <property type="organism name" value="human"/>
</dbReference>
<dbReference type="AGR" id="HGNC:14050"/>
<dbReference type="CTD" id="64963"/>
<dbReference type="DisGeNET" id="64963"/>
<dbReference type="GeneCards" id="MRPS11"/>
<dbReference type="HGNC" id="HGNC:14050">
    <property type="gene designation" value="MRPS11"/>
</dbReference>
<dbReference type="HPA" id="ENSG00000181991">
    <property type="expression patterns" value="Low tissue specificity"/>
</dbReference>
<dbReference type="MIM" id="611977">
    <property type="type" value="gene"/>
</dbReference>
<dbReference type="neXtProt" id="NX_P82912"/>
<dbReference type="OpenTargets" id="ENSG00000181991"/>
<dbReference type="PharmGKB" id="PA30994"/>
<dbReference type="VEuPathDB" id="HostDB:ENSG00000181991"/>
<dbReference type="eggNOG" id="KOG0408">
    <property type="taxonomic scope" value="Eukaryota"/>
</dbReference>
<dbReference type="GeneTree" id="ENSGT00390000016068"/>
<dbReference type="HOGENOM" id="CLU_072439_1_0_1"/>
<dbReference type="InParanoid" id="P82912"/>
<dbReference type="OMA" id="DNTPHPH"/>
<dbReference type="OrthoDB" id="1654884at2759"/>
<dbReference type="PAN-GO" id="P82912">
    <property type="GO annotations" value="7 GO annotations based on evolutionary models"/>
</dbReference>
<dbReference type="PhylomeDB" id="P82912"/>
<dbReference type="TreeFam" id="TF354231"/>
<dbReference type="PathwayCommons" id="P82912"/>
<dbReference type="Reactome" id="R-HSA-5368286">
    <property type="pathway name" value="Mitochondrial translation initiation"/>
</dbReference>
<dbReference type="Reactome" id="R-HSA-5389840">
    <property type="pathway name" value="Mitochondrial translation elongation"/>
</dbReference>
<dbReference type="Reactome" id="R-HSA-5419276">
    <property type="pathway name" value="Mitochondrial translation termination"/>
</dbReference>
<dbReference type="SignaLink" id="P82912"/>
<dbReference type="SIGNOR" id="P82912"/>
<dbReference type="BioGRID-ORCS" id="64963">
    <property type="hits" value="489 hits in 1164 CRISPR screens"/>
</dbReference>
<dbReference type="ChiTaRS" id="MRPS11">
    <property type="organism name" value="human"/>
</dbReference>
<dbReference type="GeneWiki" id="MRPS11"/>
<dbReference type="GenomeRNAi" id="64963"/>
<dbReference type="Pharos" id="P82912">
    <property type="development level" value="Tdark"/>
</dbReference>
<dbReference type="PRO" id="PR:P82912"/>
<dbReference type="Proteomes" id="UP000005640">
    <property type="component" value="Chromosome 15"/>
</dbReference>
<dbReference type="RNAct" id="P82912">
    <property type="molecule type" value="protein"/>
</dbReference>
<dbReference type="Bgee" id="ENSG00000181991">
    <property type="expression patterns" value="Expressed in apex of heart and 198 other cell types or tissues"/>
</dbReference>
<dbReference type="ExpressionAtlas" id="P82912">
    <property type="expression patterns" value="baseline and differential"/>
</dbReference>
<dbReference type="GO" id="GO:0005743">
    <property type="term" value="C:mitochondrial inner membrane"/>
    <property type="evidence" value="ECO:0000304"/>
    <property type="project" value="Reactome"/>
</dbReference>
<dbReference type="GO" id="GO:0005763">
    <property type="term" value="C:mitochondrial small ribosomal subunit"/>
    <property type="evidence" value="ECO:0000314"/>
    <property type="project" value="UniProtKB"/>
</dbReference>
<dbReference type="GO" id="GO:0005739">
    <property type="term" value="C:mitochondrion"/>
    <property type="evidence" value="ECO:0000314"/>
    <property type="project" value="HPA"/>
</dbReference>
<dbReference type="GO" id="GO:0003723">
    <property type="term" value="F:RNA binding"/>
    <property type="evidence" value="ECO:0007005"/>
    <property type="project" value="UniProtKB"/>
</dbReference>
<dbReference type="GO" id="GO:0003735">
    <property type="term" value="F:structural constituent of ribosome"/>
    <property type="evidence" value="ECO:0000250"/>
    <property type="project" value="UniProtKB"/>
</dbReference>
<dbReference type="GO" id="GO:0032543">
    <property type="term" value="P:mitochondrial translation"/>
    <property type="evidence" value="ECO:0000250"/>
    <property type="project" value="UniProtKB"/>
</dbReference>
<dbReference type="GO" id="GO:0006412">
    <property type="term" value="P:translation"/>
    <property type="evidence" value="ECO:0000318"/>
    <property type="project" value="GO_Central"/>
</dbReference>
<dbReference type="FunFam" id="3.30.420.80:FF:000006">
    <property type="entry name" value="28S ribosomal protein S11, mitochondrial"/>
    <property type="match status" value="1"/>
</dbReference>
<dbReference type="Gene3D" id="3.30.420.80">
    <property type="entry name" value="Ribosomal protein S11"/>
    <property type="match status" value="1"/>
</dbReference>
<dbReference type="HAMAP" id="MF_01310">
    <property type="entry name" value="Ribosomal_uS11"/>
    <property type="match status" value="1"/>
</dbReference>
<dbReference type="InterPro" id="IPR001971">
    <property type="entry name" value="Ribosomal_uS11"/>
</dbReference>
<dbReference type="InterPro" id="IPR018102">
    <property type="entry name" value="Ribosomal_uS11_CS"/>
</dbReference>
<dbReference type="InterPro" id="IPR036967">
    <property type="entry name" value="Ribosomal_uS11_sf"/>
</dbReference>
<dbReference type="NCBIfam" id="NF003698">
    <property type="entry name" value="PRK05309.1"/>
    <property type="match status" value="1"/>
</dbReference>
<dbReference type="PANTHER" id="PTHR11759">
    <property type="entry name" value="40S RIBOSOMAL PROTEIN S14/30S RIBOSOMAL PROTEIN S11"/>
    <property type="match status" value="1"/>
</dbReference>
<dbReference type="Pfam" id="PF00411">
    <property type="entry name" value="Ribosomal_S11"/>
    <property type="match status" value="1"/>
</dbReference>
<dbReference type="SUPFAM" id="SSF53137">
    <property type="entry name" value="Translational machinery components"/>
    <property type="match status" value="1"/>
</dbReference>
<dbReference type="PROSITE" id="PS00054">
    <property type="entry name" value="RIBOSOMAL_S11"/>
    <property type="match status" value="1"/>
</dbReference>
<protein>
    <recommendedName>
        <fullName evidence="4">Small ribosomal subunit protein uS11m</fullName>
    </recommendedName>
    <alternativeName>
        <fullName>28S ribosomal protein S11, mitochondrial</fullName>
        <shortName>MRP-S11</shortName>
        <shortName>S11mt</shortName>
    </alternativeName>
    <alternativeName>
        <fullName>Cervical cancer proto-oncogene 2 protein</fullName>
        <shortName>HCC-2</shortName>
    </alternativeName>
</protein>
<proteinExistence type="evidence at protein level"/>
<keyword id="KW-0002">3D-structure</keyword>
<keyword id="KW-0025">Alternative splicing</keyword>
<keyword id="KW-0496">Mitochondrion</keyword>
<keyword id="KW-1267">Proteomics identification</keyword>
<keyword id="KW-1185">Reference proteome</keyword>
<keyword id="KW-0687">Ribonucleoprotein</keyword>
<keyword id="KW-0689">Ribosomal protein</keyword>
<keyword id="KW-0809">Transit peptide</keyword>
<feature type="transit peptide" description="Mitochondrion" evidence="1">
    <location>
        <begin position="1"/>
        <end status="unknown"/>
    </location>
</feature>
<feature type="chain" id="PRO_0000030602" description="Small ribosomal subunit protein uS11m">
    <location>
        <begin status="unknown"/>
        <end position="194"/>
    </location>
</feature>
<feature type="splice variant" id="VSP_005719" description="In isoform 2." evidence="3">
    <location>
        <position position="23"/>
    </location>
</feature>
<feature type="splice variant" id="VSP_005720" description="In isoform 3." evidence="3">
    <location>
        <begin position="62"/>
        <end position="94"/>
    </location>
</feature>
<feature type="sequence variant" id="VAR_052054" description="In dbSNP:rs16941904.">
    <original>R</original>
    <variation>W</variation>
    <location>
        <position position="10"/>
    </location>
</feature>
<feature type="sequence variant" id="VAR_052055" description="In dbSNP:rs16941907.">
    <original>Q</original>
    <variation>H</variation>
    <location>
        <position position="51"/>
    </location>
</feature>
<feature type="sequence conflict" description="In Ref. 3; BAB15381." evidence="5" ref="3">
    <original>N</original>
    <variation>Y</variation>
    <location>
        <position position="52"/>
    </location>
</feature>
<feature type="strand" evidence="7">
    <location>
        <begin position="67"/>
        <end position="69"/>
    </location>
</feature>
<feature type="helix" evidence="7">
    <location>
        <begin position="80"/>
        <end position="82"/>
    </location>
</feature>
<feature type="strand" evidence="7">
    <location>
        <begin position="85"/>
        <end position="90"/>
    </location>
</feature>
<feature type="strand" evidence="7">
    <location>
        <begin position="95"/>
        <end position="100"/>
    </location>
</feature>
<feature type="strand" evidence="7">
    <location>
        <begin position="106"/>
        <end position="111"/>
    </location>
</feature>
<feature type="turn" evidence="7">
    <location>
        <begin position="112"/>
        <end position="116"/>
    </location>
</feature>
<feature type="helix" evidence="7">
    <location>
        <begin position="119"/>
        <end position="121"/>
    </location>
</feature>
<feature type="strand" evidence="8">
    <location>
        <begin position="122"/>
        <end position="124"/>
    </location>
</feature>
<feature type="helix" evidence="7">
    <location>
        <begin position="125"/>
        <end position="140"/>
    </location>
</feature>
<feature type="turn" evidence="7">
    <location>
        <begin position="141"/>
        <end position="143"/>
    </location>
</feature>
<feature type="strand" evidence="7">
    <location>
        <begin position="146"/>
        <end position="153"/>
    </location>
</feature>
<feature type="helix" evidence="7">
    <location>
        <begin position="158"/>
        <end position="167"/>
    </location>
</feature>
<feature type="strand" evidence="7">
    <location>
        <begin position="171"/>
        <end position="177"/>
    </location>
</feature>
<sequence>MQAVRNAGSRFLRSWTWPQTAGRVVARTPAGTICTGARQLQDAAAKQKVEQNAAPSHTKFSIYPPIPGEESSLRWAGKKFEEIPIAHIKASHNNTQIQVVSASNEPLAFASCGTEGFRNAKKGTGIAAQTAGIAAAARAKQKGVIHIRVVVKGLGPGRLSAMHGLIMGGLEVISITDNTPIPHNGCRPRKARKL</sequence>
<gene>
    <name type="primary">MRPS11</name>
    <name type="synonym">RPMS11</name>
    <name type="ORF">HCC2</name>
</gene>
<comment type="subunit">
    <text evidence="2">Component of the mitochondrial small ribosomal subunit (mt-SSU). Mature mammalian 55S mitochondrial ribosomes consist of a small (28S) and a large (39S) subunit. The 28S small subunit contains a 12S ribosomal RNA (12S mt-rRNA) and 30 different proteins. The 39S large subunit contains a 16S rRNA (16S mt-rRNA), a copy of mitochondrial valine transfer RNA (mt-tRNA(Val)), which plays an integral structural role, and 52 different proteins.</text>
</comment>
<comment type="interaction">
    <interactant intactId="EBI-2371859">
        <id>P82912</id>
    </interactant>
    <interactant intactId="EBI-747693">
        <id>P41227</id>
        <label>NAA10</label>
    </interactant>
    <organismsDiffer>false</organismsDiffer>
    <experiments>3</experiments>
</comment>
<comment type="subcellular location">
    <subcellularLocation>
        <location evidence="2">Mitochondrion</location>
    </subcellularLocation>
</comment>
<comment type="alternative products">
    <event type="alternative splicing"/>
    <isoform>
        <id>P82912-1</id>
        <name>1</name>
        <sequence type="displayed"/>
    </isoform>
    <isoform>
        <id>P82912-2</id>
        <name>2</name>
        <sequence type="described" ref="VSP_005719"/>
    </isoform>
    <isoform>
        <id>P82912-3</id>
        <name>3</name>
        <sequence type="described" ref="VSP_005720"/>
    </isoform>
    <text>Experimental confirmation may be lacking for some isoforms.</text>
</comment>
<comment type="similarity">
    <text evidence="5">Belongs to the universal ribosomal protein uS11 family.</text>
</comment>
<reference key="1">
    <citation type="journal article" date="2001" name="J. Biol. Chem.">
        <title>Proteomic analysis of the mammalian mitochondrial ribosome. Identification of protein components in the 28S small subunit.</title>
        <authorList>
            <person name="Suzuki T."/>
            <person name="Terasaki M."/>
            <person name="Takemoto-Hori C."/>
            <person name="Hanada T."/>
            <person name="Ueda T."/>
            <person name="Wada A."/>
            <person name="Watanabe K."/>
        </authorList>
    </citation>
    <scope>NUCLEOTIDE SEQUENCE [MRNA] (ISOFORM 1)</scope>
</reference>
<reference key="2">
    <citation type="submission" date="2000-11" db="EMBL/GenBank/DDBJ databases">
        <title>Identification of a new proto-oncogene in human cervical cancer.</title>
        <authorList>
            <person name="Kim J.W."/>
        </authorList>
    </citation>
    <scope>NUCLEOTIDE SEQUENCE [GENOMIC DNA] (ISOFORM 2)</scope>
</reference>
<reference key="3">
    <citation type="journal article" date="2004" name="Nat. Genet.">
        <title>Complete sequencing and characterization of 21,243 full-length human cDNAs.</title>
        <authorList>
            <person name="Ota T."/>
            <person name="Suzuki Y."/>
            <person name="Nishikawa T."/>
            <person name="Otsuki T."/>
            <person name="Sugiyama T."/>
            <person name="Irie R."/>
            <person name="Wakamatsu A."/>
            <person name="Hayashi K."/>
            <person name="Sato H."/>
            <person name="Nagai K."/>
            <person name="Kimura K."/>
            <person name="Makita H."/>
            <person name="Sekine M."/>
            <person name="Obayashi M."/>
            <person name="Nishi T."/>
            <person name="Shibahara T."/>
            <person name="Tanaka T."/>
            <person name="Ishii S."/>
            <person name="Yamamoto J."/>
            <person name="Saito K."/>
            <person name="Kawai Y."/>
            <person name="Isono Y."/>
            <person name="Nakamura Y."/>
            <person name="Nagahari K."/>
            <person name="Murakami K."/>
            <person name="Yasuda T."/>
            <person name="Iwayanagi T."/>
            <person name="Wagatsuma M."/>
            <person name="Shiratori A."/>
            <person name="Sudo H."/>
            <person name="Hosoiri T."/>
            <person name="Kaku Y."/>
            <person name="Kodaira H."/>
            <person name="Kondo H."/>
            <person name="Sugawara M."/>
            <person name="Takahashi M."/>
            <person name="Kanda K."/>
            <person name="Yokoi T."/>
            <person name="Furuya T."/>
            <person name="Kikkawa E."/>
            <person name="Omura Y."/>
            <person name="Abe K."/>
            <person name="Kamihara K."/>
            <person name="Katsuta N."/>
            <person name="Sato K."/>
            <person name="Tanikawa M."/>
            <person name="Yamazaki M."/>
            <person name="Ninomiya K."/>
            <person name="Ishibashi T."/>
            <person name="Yamashita H."/>
            <person name="Murakawa K."/>
            <person name="Fujimori K."/>
            <person name="Tanai H."/>
            <person name="Kimata M."/>
            <person name="Watanabe M."/>
            <person name="Hiraoka S."/>
            <person name="Chiba Y."/>
            <person name="Ishida S."/>
            <person name="Ono Y."/>
            <person name="Takiguchi S."/>
            <person name="Watanabe S."/>
            <person name="Yosida M."/>
            <person name="Hotuta T."/>
            <person name="Kusano J."/>
            <person name="Kanehori K."/>
            <person name="Takahashi-Fujii A."/>
            <person name="Hara H."/>
            <person name="Tanase T.-O."/>
            <person name="Nomura Y."/>
            <person name="Togiya S."/>
            <person name="Komai F."/>
            <person name="Hara R."/>
            <person name="Takeuchi K."/>
            <person name="Arita M."/>
            <person name="Imose N."/>
            <person name="Musashino K."/>
            <person name="Yuuki H."/>
            <person name="Oshima A."/>
            <person name="Sasaki N."/>
            <person name="Aotsuka S."/>
            <person name="Yoshikawa Y."/>
            <person name="Matsunawa H."/>
            <person name="Ichihara T."/>
            <person name="Shiohata N."/>
            <person name="Sano S."/>
            <person name="Moriya S."/>
            <person name="Momiyama H."/>
            <person name="Satoh N."/>
            <person name="Takami S."/>
            <person name="Terashima Y."/>
            <person name="Suzuki O."/>
            <person name="Nakagawa S."/>
            <person name="Senoh A."/>
            <person name="Mizoguchi H."/>
            <person name="Goto Y."/>
            <person name="Shimizu F."/>
            <person name="Wakebe H."/>
            <person name="Hishigaki H."/>
            <person name="Watanabe T."/>
            <person name="Sugiyama A."/>
            <person name="Takemoto M."/>
            <person name="Kawakami B."/>
            <person name="Yamazaki M."/>
            <person name="Watanabe K."/>
            <person name="Kumagai A."/>
            <person name="Itakura S."/>
            <person name="Fukuzumi Y."/>
            <person name="Fujimori Y."/>
            <person name="Komiyama M."/>
            <person name="Tashiro H."/>
            <person name="Tanigami A."/>
            <person name="Fujiwara T."/>
            <person name="Ono T."/>
            <person name="Yamada K."/>
            <person name="Fujii Y."/>
            <person name="Ozaki K."/>
            <person name="Hirao M."/>
            <person name="Ohmori Y."/>
            <person name="Kawabata A."/>
            <person name="Hikiji T."/>
            <person name="Kobatake N."/>
            <person name="Inagaki H."/>
            <person name="Ikema Y."/>
            <person name="Okamoto S."/>
            <person name="Okitani R."/>
            <person name="Kawakami T."/>
            <person name="Noguchi S."/>
            <person name="Itoh T."/>
            <person name="Shigeta K."/>
            <person name="Senba T."/>
            <person name="Matsumura K."/>
            <person name="Nakajima Y."/>
            <person name="Mizuno T."/>
            <person name="Morinaga M."/>
            <person name="Sasaki M."/>
            <person name="Togashi T."/>
            <person name="Oyama M."/>
            <person name="Hata H."/>
            <person name="Watanabe M."/>
            <person name="Komatsu T."/>
            <person name="Mizushima-Sugano J."/>
            <person name="Satoh T."/>
            <person name="Shirai Y."/>
            <person name="Takahashi Y."/>
            <person name="Nakagawa K."/>
            <person name="Okumura K."/>
            <person name="Nagase T."/>
            <person name="Nomura N."/>
            <person name="Kikuchi H."/>
            <person name="Masuho Y."/>
            <person name="Yamashita R."/>
            <person name="Nakai K."/>
            <person name="Yada T."/>
            <person name="Nakamura Y."/>
            <person name="Ohara O."/>
            <person name="Isogai T."/>
            <person name="Sugano S."/>
        </authorList>
    </citation>
    <scope>NUCLEOTIDE SEQUENCE [LARGE SCALE MRNA] (ISOFORM 1)</scope>
    <source>
        <tissue>Colon</tissue>
    </source>
</reference>
<reference key="4">
    <citation type="submission" date="2005-07" db="EMBL/GenBank/DDBJ databases">
        <authorList>
            <person name="Mural R.J."/>
            <person name="Istrail S."/>
            <person name="Sutton G.G."/>
            <person name="Florea L."/>
            <person name="Halpern A.L."/>
            <person name="Mobarry C.M."/>
            <person name="Lippert R."/>
            <person name="Walenz B."/>
            <person name="Shatkay H."/>
            <person name="Dew I."/>
            <person name="Miller J.R."/>
            <person name="Flanigan M.J."/>
            <person name="Edwards N.J."/>
            <person name="Bolanos R."/>
            <person name="Fasulo D."/>
            <person name="Halldorsson B.V."/>
            <person name="Hannenhalli S."/>
            <person name="Turner R."/>
            <person name="Yooseph S."/>
            <person name="Lu F."/>
            <person name="Nusskern D.R."/>
            <person name="Shue B.C."/>
            <person name="Zheng X.H."/>
            <person name="Zhong F."/>
            <person name="Delcher A.L."/>
            <person name="Huson D.H."/>
            <person name="Kravitz S.A."/>
            <person name="Mouchard L."/>
            <person name="Reinert K."/>
            <person name="Remington K.A."/>
            <person name="Clark A.G."/>
            <person name="Waterman M.S."/>
            <person name="Eichler E.E."/>
            <person name="Adams M.D."/>
            <person name="Hunkapiller M.W."/>
            <person name="Myers E.W."/>
            <person name="Venter J.C."/>
        </authorList>
    </citation>
    <scope>NUCLEOTIDE SEQUENCE [LARGE SCALE GENOMIC DNA]</scope>
</reference>
<reference key="5">
    <citation type="journal article" date="2004" name="Genome Res.">
        <title>The status, quality, and expansion of the NIH full-length cDNA project: the Mammalian Gene Collection (MGC).</title>
        <authorList>
            <consortium name="The MGC Project Team"/>
        </authorList>
    </citation>
    <scope>NUCLEOTIDE SEQUENCE [LARGE SCALE MRNA] (ISOFORMS 1; 2 AND 3)</scope>
    <source>
        <tissue>Cervix</tissue>
        <tissue>Kidney</tissue>
        <tissue>Muscle</tissue>
    </source>
</reference>
<reference key="6">
    <citation type="journal article" date="2001" name="J. Biol. Chem.">
        <title>The small subunit of the mammalian mitochondrial ribosome: identification of the full complement of ribosomal proteins present.</title>
        <authorList>
            <person name="Koc E.C."/>
            <person name="Burkhart W."/>
            <person name="Blackburn K."/>
            <person name="Moseley A."/>
            <person name="Spremulli L.L."/>
        </authorList>
    </citation>
    <scope>IDENTIFICATION</scope>
</reference>
<reference key="7">
    <citation type="journal article" date="2011" name="BMC Syst. Biol.">
        <title>Initial characterization of the human central proteome.</title>
        <authorList>
            <person name="Burkard T.R."/>
            <person name="Planyavsky M."/>
            <person name="Kaupe I."/>
            <person name="Breitwieser F.P."/>
            <person name="Buerckstuemmer T."/>
            <person name="Bennett K.L."/>
            <person name="Superti-Furga G."/>
            <person name="Colinge J."/>
        </authorList>
    </citation>
    <scope>IDENTIFICATION BY MASS SPECTROMETRY [LARGE SCALE ANALYSIS]</scope>
</reference>
<reference evidence="6" key="8">
    <citation type="journal article" date="2015" name="Science">
        <title>Ribosome. The structure of the human mitochondrial ribosome.</title>
        <authorList>
            <person name="Amunts A."/>
            <person name="Brown A."/>
            <person name="Toots J."/>
            <person name="Scheres S.H."/>
            <person name="Ramakrishnan V."/>
        </authorList>
    </citation>
    <scope>STRUCTURE BY ELECTRON MICROSCOPY (3.50 ANGSTROMS)</scope>
    <scope>SUBCELLULAR LOCATION</scope>
    <scope>SUBUNIT</scope>
</reference>
<evidence type="ECO:0000255" key="1"/>
<evidence type="ECO:0000269" key="2">
    <source>
    </source>
</evidence>
<evidence type="ECO:0000303" key="3">
    <source>
    </source>
</evidence>
<evidence type="ECO:0000303" key="4">
    <source>
    </source>
</evidence>
<evidence type="ECO:0000305" key="5"/>
<evidence type="ECO:0007744" key="6">
    <source>
        <dbReference type="PDB" id="3J9M"/>
    </source>
</evidence>
<evidence type="ECO:0007829" key="7">
    <source>
        <dbReference type="PDB" id="8CSS"/>
    </source>
</evidence>
<evidence type="ECO:0007829" key="8">
    <source>
        <dbReference type="PDB" id="8QRL"/>
    </source>
</evidence>
<organism>
    <name type="scientific">Homo sapiens</name>
    <name type="common">Human</name>
    <dbReference type="NCBI Taxonomy" id="9606"/>
    <lineage>
        <taxon>Eukaryota</taxon>
        <taxon>Metazoa</taxon>
        <taxon>Chordata</taxon>
        <taxon>Craniata</taxon>
        <taxon>Vertebrata</taxon>
        <taxon>Euteleostomi</taxon>
        <taxon>Mammalia</taxon>
        <taxon>Eutheria</taxon>
        <taxon>Euarchontoglires</taxon>
        <taxon>Primates</taxon>
        <taxon>Haplorrhini</taxon>
        <taxon>Catarrhini</taxon>
        <taxon>Hominidae</taxon>
        <taxon>Homo</taxon>
    </lineage>
</organism>
<accession>P82912</accession>
<accession>B2RD52</accession>
<accession>Q969D7</accession>
<accession>Q96GI3</accession>
<accession>Q9BYC3</accession>
<name>RT11_HUMAN</name>